<proteinExistence type="evidence at transcript level"/>
<feature type="chain" id="PRO_0000259575" description="Mitochondrial inner membrane protease subunit 1">
    <location>
        <begin position="1"/>
        <end position="167"/>
    </location>
</feature>
<feature type="active site" evidence="1">
    <location>
        <position position="40"/>
    </location>
</feature>
<feature type="active site" evidence="1">
    <location>
        <position position="83"/>
    </location>
</feature>
<name>IMP1L_XENTR</name>
<dbReference type="EC" id="3.4.21.-"/>
<dbReference type="EMBL" id="CR760609">
    <property type="protein sequence ID" value="CAJ81736.1"/>
    <property type="molecule type" value="mRNA"/>
</dbReference>
<dbReference type="RefSeq" id="NP_001016589.1">
    <property type="nucleotide sequence ID" value="NM_001016589.2"/>
</dbReference>
<dbReference type="SMR" id="Q28I39"/>
<dbReference type="FunCoup" id="Q28I39">
    <property type="interactions" value="1586"/>
</dbReference>
<dbReference type="STRING" id="8364.ENSXETP00000004662"/>
<dbReference type="PaxDb" id="8364-ENSXETP00000017934"/>
<dbReference type="GeneID" id="549343"/>
<dbReference type="KEGG" id="xtr:549343"/>
<dbReference type="AGR" id="Xenbase:XB-GENE-5806212"/>
<dbReference type="CTD" id="196294"/>
<dbReference type="Xenbase" id="XB-GENE-5806212">
    <property type="gene designation" value="immp1l"/>
</dbReference>
<dbReference type="eggNOG" id="KOG0171">
    <property type="taxonomic scope" value="Eukaryota"/>
</dbReference>
<dbReference type="HOGENOM" id="CLU_028723_4_3_1"/>
<dbReference type="InParanoid" id="Q28I39"/>
<dbReference type="OMA" id="LCKGPSM"/>
<dbReference type="OrthoDB" id="308440at2759"/>
<dbReference type="PhylomeDB" id="Q28I39"/>
<dbReference type="TreeFam" id="TF315083"/>
<dbReference type="Proteomes" id="UP000008143">
    <property type="component" value="Chromosome 4"/>
</dbReference>
<dbReference type="Bgee" id="ENSXETG00000008178">
    <property type="expression patterns" value="Expressed in egg cell and 14 other cell types or tissues"/>
</dbReference>
<dbReference type="ExpressionAtlas" id="Q28I39">
    <property type="expression patterns" value="baseline"/>
</dbReference>
<dbReference type="GO" id="GO:0005743">
    <property type="term" value="C:mitochondrial inner membrane"/>
    <property type="evidence" value="ECO:0007669"/>
    <property type="project" value="UniProtKB-SubCell"/>
</dbReference>
<dbReference type="GO" id="GO:0004252">
    <property type="term" value="F:serine-type endopeptidase activity"/>
    <property type="evidence" value="ECO:0007669"/>
    <property type="project" value="InterPro"/>
</dbReference>
<dbReference type="GO" id="GO:0006465">
    <property type="term" value="P:signal peptide processing"/>
    <property type="evidence" value="ECO:0007669"/>
    <property type="project" value="InterPro"/>
</dbReference>
<dbReference type="CDD" id="cd06530">
    <property type="entry name" value="S26_SPase_I"/>
    <property type="match status" value="1"/>
</dbReference>
<dbReference type="FunFam" id="2.10.109.10:FF:000010">
    <property type="entry name" value="Mitochondrial inner membrane protease subunit"/>
    <property type="match status" value="1"/>
</dbReference>
<dbReference type="Gene3D" id="2.10.109.10">
    <property type="entry name" value="Umud Fragment, subunit A"/>
    <property type="match status" value="1"/>
</dbReference>
<dbReference type="InterPro" id="IPR036286">
    <property type="entry name" value="LexA/Signal_pep-like_sf"/>
</dbReference>
<dbReference type="InterPro" id="IPR052064">
    <property type="entry name" value="Mito_IMP1_subunit"/>
</dbReference>
<dbReference type="InterPro" id="IPR000223">
    <property type="entry name" value="Pept_S26A_signal_pept_1"/>
</dbReference>
<dbReference type="InterPro" id="IPR019533">
    <property type="entry name" value="Peptidase_S26"/>
</dbReference>
<dbReference type="NCBIfam" id="TIGR02227">
    <property type="entry name" value="sigpep_I_bact"/>
    <property type="match status" value="1"/>
</dbReference>
<dbReference type="PANTHER" id="PTHR12383:SF16">
    <property type="entry name" value="MITOCHONDRIAL INNER MEMBRANE PROTEASE SUBUNIT 1"/>
    <property type="match status" value="1"/>
</dbReference>
<dbReference type="PANTHER" id="PTHR12383">
    <property type="entry name" value="PROTEASE FAMILY S26 MITOCHONDRIAL INNER MEMBRANE PROTEASE-RELATED"/>
    <property type="match status" value="1"/>
</dbReference>
<dbReference type="Pfam" id="PF10502">
    <property type="entry name" value="Peptidase_S26"/>
    <property type="match status" value="2"/>
</dbReference>
<dbReference type="PRINTS" id="PR00727">
    <property type="entry name" value="LEADERPTASE"/>
</dbReference>
<dbReference type="SUPFAM" id="SSF51306">
    <property type="entry name" value="LexA/Signal peptidase"/>
    <property type="match status" value="1"/>
</dbReference>
<keyword id="KW-0378">Hydrolase</keyword>
<keyword id="KW-0472">Membrane</keyword>
<keyword id="KW-0496">Mitochondrion</keyword>
<keyword id="KW-0999">Mitochondrion inner membrane</keyword>
<keyword id="KW-0645">Protease</keyword>
<keyword id="KW-1185">Reference proteome</keyword>
<gene>
    <name type="primary">immp1l</name>
    <name type="ORF">TEgg068a14.1</name>
</gene>
<protein>
    <recommendedName>
        <fullName>Mitochondrial inner membrane protease subunit 1</fullName>
        <ecNumber>3.4.21.-</ecNumber>
    </recommendedName>
    <alternativeName>
        <fullName>IMP1-like protein</fullName>
    </alternativeName>
</protein>
<organism>
    <name type="scientific">Xenopus tropicalis</name>
    <name type="common">Western clawed frog</name>
    <name type="synonym">Silurana tropicalis</name>
    <dbReference type="NCBI Taxonomy" id="8364"/>
    <lineage>
        <taxon>Eukaryota</taxon>
        <taxon>Metazoa</taxon>
        <taxon>Chordata</taxon>
        <taxon>Craniata</taxon>
        <taxon>Vertebrata</taxon>
        <taxon>Euteleostomi</taxon>
        <taxon>Amphibia</taxon>
        <taxon>Batrachia</taxon>
        <taxon>Anura</taxon>
        <taxon>Pipoidea</taxon>
        <taxon>Pipidae</taxon>
        <taxon>Xenopodinae</taxon>
        <taxon>Xenopus</taxon>
        <taxon>Silurana</taxon>
    </lineage>
</organism>
<accession>Q28I39</accession>
<sequence length="167" mass="18661">MIRRIVGKTLGLLGYTIQYGCIAHCAFEYIGEVVICSGPSMEPTIRNYDVLLCDNLSRHFFSIHKGDIIVAKSPDKPSVNICKRVIGLEGDKVCMSSPSALLKRHTYVPKGHVWLEGDNLDNSTDSRSYGPVPYALIRGRICLRVWPLESFGPLKESPNGRIQDNWP</sequence>
<comment type="function">
    <text evidence="1">Catalyzes the removal of transit peptides required for the targeting of proteins from the mitochondrial matrix, across the inner membrane, into the inter-membrane space.</text>
</comment>
<comment type="subunit">
    <text evidence="1">Heterodimer of 2 subunits, IMMPL1 and IMMPL2.</text>
</comment>
<comment type="subcellular location">
    <subcellularLocation>
        <location evidence="1">Mitochondrion inner membrane</location>
    </subcellularLocation>
</comment>
<comment type="similarity">
    <text evidence="2">Belongs to the peptidase S26 family. IMP1 subfamily.</text>
</comment>
<reference key="1">
    <citation type="submission" date="2006-06" db="EMBL/GenBank/DDBJ databases">
        <authorList>
            <consortium name="Sanger Xenopus tropicalis EST/cDNA project"/>
        </authorList>
    </citation>
    <scope>NUCLEOTIDE SEQUENCE [LARGE SCALE MRNA]</scope>
    <source>
        <tissue>Egg</tissue>
    </source>
</reference>
<evidence type="ECO:0000250" key="1"/>
<evidence type="ECO:0000305" key="2"/>